<organism>
    <name type="scientific">Escherichia coli (strain K12)</name>
    <dbReference type="NCBI Taxonomy" id="83333"/>
    <lineage>
        <taxon>Bacteria</taxon>
        <taxon>Pseudomonadati</taxon>
        <taxon>Pseudomonadota</taxon>
        <taxon>Gammaproteobacteria</taxon>
        <taxon>Enterobacterales</taxon>
        <taxon>Enterobacteriaceae</taxon>
        <taxon>Escherichia</taxon>
    </lineage>
</organism>
<reference key="1">
    <citation type="journal article" date="1996" name="DNA Res.">
        <title>A 718-kb DNA sequence of the Escherichia coli K-12 genome corresponding to the 12.7-28.0 min region on the linkage map.</title>
        <authorList>
            <person name="Oshima T."/>
            <person name="Aiba H."/>
            <person name="Baba T."/>
            <person name="Fujita K."/>
            <person name="Hayashi K."/>
            <person name="Honjo A."/>
            <person name="Ikemoto K."/>
            <person name="Inada T."/>
            <person name="Itoh T."/>
            <person name="Kajihara M."/>
            <person name="Kanai K."/>
            <person name="Kashimoto K."/>
            <person name="Kimura S."/>
            <person name="Kitagawa M."/>
            <person name="Makino K."/>
            <person name="Masuda S."/>
            <person name="Miki T."/>
            <person name="Mizobuchi K."/>
            <person name="Mori H."/>
            <person name="Motomura K."/>
            <person name="Nakamura Y."/>
            <person name="Nashimoto H."/>
            <person name="Nishio Y."/>
            <person name="Saito N."/>
            <person name="Sampei G."/>
            <person name="Seki Y."/>
            <person name="Tagami H."/>
            <person name="Takemoto K."/>
            <person name="Wada C."/>
            <person name="Yamamoto Y."/>
            <person name="Yano M."/>
            <person name="Horiuchi T."/>
        </authorList>
    </citation>
    <scope>NUCLEOTIDE SEQUENCE [LARGE SCALE GENOMIC DNA]</scope>
    <source>
        <strain>K12 / W3110 / ATCC 27325 / DSM 5911</strain>
    </source>
</reference>
<reference key="2">
    <citation type="journal article" date="1997" name="Science">
        <title>The complete genome sequence of Escherichia coli K-12.</title>
        <authorList>
            <person name="Blattner F.R."/>
            <person name="Plunkett G. III"/>
            <person name="Bloch C.A."/>
            <person name="Perna N.T."/>
            <person name="Burland V."/>
            <person name="Riley M."/>
            <person name="Collado-Vides J."/>
            <person name="Glasner J.D."/>
            <person name="Rode C.K."/>
            <person name="Mayhew G.F."/>
            <person name="Gregor J."/>
            <person name="Davis N.W."/>
            <person name="Kirkpatrick H.A."/>
            <person name="Goeden M.A."/>
            <person name="Rose D.J."/>
            <person name="Mau B."/>
            <person name="Shao Y."/>
        </authorList>
    </citation>
    <scope>NUCLEOTIDE SEQUENCE [LARGE SCALE GENOMIC DNA]</scope>
    <source>
        <strain>K12 / MG1655 / ATCC 47076</strain>
    </source>
</reference>
<reference key="3">
    <citation type="journal article" date="2006" name="Mol. Syst. Biol.">
        <title>Highly accurate genome sequences of Escherichia coli K-12 strains MG1655 and W3110.</title>
        <authorList>
            <person name="Hayashi K."/>
            <person name="Morooka N."/>
            <person name="Yamamoto Y."/>
            <person name="Fujita K."/>
            <person name="Isono K."/>
            <person name="Choi S."/>
            <person name="Ohtsubo E."/>
            <person name="Baba T."/>
            <person name="Wanner B.L."/>
            <person name="Mori H."/>
            <person name="Horiuchi T."/>
        </authorList>
    </citation>
    <scope>NUCLEOTIDE SEQUENCE [LARGE SCALE GENOMIC DNA]</scope>
    <source>
        <strain>K12 / W3110 / ATCC 27325 / DSM 5911</strain>
    </source>
</reference>
<reference key="4">
    <citation type="journal article" date="2006" name="Biochimie">
        <title>Analysis of the Escherichia coli RNA degradosome composition by a proteomic approach.</title>
        <authorList>
            <person name="Regonesi M.E."/>
            <person name="Del Favero M."/>
            <person name="Basilico F."/>
            <person name="Briani F."/>
            <person name="Benazzi L."/>
            <person name="Tortora P."/>
            <person name="Mauri P."/>
            <person name="Deho G."/>
        </authorList>
    </citation>
    <scope>IDENTIFICATION BY MASS SPECTROMETRY</scope>
    <scope>SUBCELLULAR LOCATION</scope>
</reference>
<reference key="5">
    <citation type="journal article" date="2006" name="Mol. Microbiol.">
        <title>Cyclic-di-GMP-mediated signalling within the sigma network of Escherichia coli.</title>
        <authorList>
            <person name="Weber H."/>
            <person name="Pesavento C."/>
            <person name="Possling A."/>
            <person name="Tischendorf G."/>
            <person name="Hengge R."/>
        </authorList>
    </citation>
    <scope>INDUCTION</scope>
    <scope>RPOS-DEPENDENCE</scope>
    <source>
        <strain>K12 / MC4100</strain>
    </source>
</reference>
<reference key="6">
    <citation type="journal article" date="2015" name="J. Bacteriol.">
        <title>Systematic nomenclature for GGDEF and EAL domain-containing cyclic di-GMP turnover proteins of Escherichia coli.</title>
        <authorList>
            <person name="Hengge R."/>
            <person name="Galperin M.Y."/>
            <person name="Ghigo J.M."/>
            <person name="Gomelsky M."/>
            <person name="Green J."/>
            <person name="Hughes K.T."/>
            <person name="Jenal U."/>
            <person name="Landini P."/>
        </authorList>
    </citation>
    <scope>NOMENCLATURE</scope>
</reference>
<comment type="function">
    <text evidence="1">Phosphodiesterase (PDE) that catalyzes the hydrolysis of cyclic-di-GMP (c-di-GMP) to 5'-pGpG.</text>
</comment>
<comment type="catalytic activity">
    <reaction evidence="1">
        <text>3',3'-c-di-GMP + H2O = 5'-phosphoguanylyl(3'-&gt;5')guanosine + H(+)</text>
        <dbReference type="Rhea" id="RHEA:24902"/>
        <dbReference type="ChEBI" id="CHEBI:15377"/>
        <dbReference type="ChEBI" id="CHEBI:15378"/>
        <dbReference type="ChEBI" id="CHEBI:58754"/>
        <dbReference type="ChEBI" id="CHEBI:58805"/>
        <dbReference type="EC" id="3.1.4.52"/>
    </reaction>
</comment>
<comment type="subcellular location">
    <subcellularLocation>
        <location evidence="7">Cell membrane</location>
        <topology evidence="2">Multi-pass membrane protein</topology>
    </subcellularLocation>
    <text evidence="4">Found associated with the RNA degradosome.</text>
</comment>
<comment type="induction">
    <text evidence="5">Induced by 0.3 M NaCl in an RpoS-dependent fashion.</text>
</comment>
<sequence>MRNTLIPILVAICLFITGVAILNIQLWYSAKAEYLAGARYAANNINHILEEASQATQTAVNIAGKECNLEEQYQLGTEAALKPHLRTIIILKQGIVWCTSLPGNRVLLSRIPVFPDSNLLLAPAIDTVNRLPILLYQNQFADTRILVTISDQHIRGALNVPLKGVRYVLRVADDIIGPTGDVMTLNGHYPYTEKVHSTKYHFTIIFNPPPLFSFYRLIDKGFGILIFILLIACAAAFLLDRYFNKSATPEEILRRAINNGEIVPFYQPVVNGREGTLRGVEVLARWKQPHGGYISPAAFIPLAEKSGLIVPLTQSLMNQVARQMNAIASKLPEGFHIGINFSASHIISPTFVDECLNFRDSFTRRDLNLVLEVTEREPLNVDESLVQRLNILHENGFVIALDDFGTGYSGLSYLHDLHIDYIKIDHSFVGRVNADPESTRILDCVLDLARKLSISIVAEGVETKEQLDYLNQNYITFQQGYYFYKPVTYIDLVKIILSKPKVKVVVE</sequence>
<feature type="chain" id="PRO_0000168853" description="Probable cyclic di-GMP phosphodiesterase PdeG">
    <location>
        <begin position="1"/>
        <end position="507"/>
    </location>
</feature>
<feature type="transmembrane region" description="Helical" evidence="2">
    <location>
        <begin position="4"/>
        <end position="24"/>
    </location>
</feature>
<feature type="transmembrane region" description="Helical" evidence="2">
    <location>
        <begin position="217"/>
        <end position="237"/>
    </location>
</feature>
<feature type="domain" description="EAL" evidence="3">
    <location>
        <begin position="246"/>
        <end position="500"/>
    </location>
</feature>
<dbReference type="EC" id="3.1.4.52" evidence="1"/>
<dbReference type="EMBL" id="U00096">
    <property type="protein sequence ID" value="AAC74252.2"/>
    <property type="molecule type" value="Genomic_DNA"/>
</dbReference>
<dbReference type="EMBL" id="AP009048">
    <property type="protein sequence ID" value="BAA36000.2"/>
    <property type="molecule type" value="Genomic_DNA"/>
</dbReference>
<dbReference type="PIR" id="E64862">
    <property type="entry name" value="E64862"/>
</dbReference>
<dbReference type="RefSeq" id="NP_415686.2">
    <property type="nucleotide sequence ID" value="NC_000913.3"/>
</dbReference>
<dbReference type="RefSeq" id="WP_001246499.1">
    <property type="nucleotide sequence ID" value="NZ_LN832404.1"/>
</dbReference>
<dbReference type="SMR" id="P75995"/>
<dbReference type="BioGRID" id="4261455">
    <property type="interactions" value="49"/>
</dbReference>
<dbReference type="DIP" id="DIP-11554N"/>
<dbReference type="FunCoup" id="P75995">
    <property type="interactions" value="31"/>
</dbReference>
<dbReference type="IntAct" id="P75995">
    <property type="interactions" value="1"/>
</dbReference>
<dbReference type="STRING" id="511145.b1168"/>
<dbReference type="PaxDb" id="511145-b1168"/>
<dbReference type="EnsemblBacteria" id="AAC74252">
    <property type="protein sequence ID" value="AAC74252"/>
    <property type="gene ID" value="b1168"/>
</dbReference>
<dbReference type="GeneID" id="945738"/>
<dbReference type="KEGG" id="ecj:JW5174"/>
<dbReference type="KEGG" id="eco:b1168"/>
<dbReference type="KEGG" id="ecoc:C3026_06880"/>
<dbReference type="PATRIC" id="fig|1411691.4.peg.1123"/>
<dbReference type="EchoBASE" id="EB3647"/>
<dbReference type="eggNOG" id="COG2200">
    <property type="taxonomic scope" value="Bacteria"/>
</dbReference>
<dbReference type="HOGENOM" id="CLU_000445_131_0_6"/>
<dbReference type="InParanoid" id="P75995"/>
<dbReference type="OMA" id="VWCSSLP"/>
<dbReference type="OrthoDB" id="675397at2"/>
<dbReference type="PhylomeDB" id="P75995"/>
<dbReference type="BioCyc" id="EcoCyc:G6608-MONOMER"/>
<dbReference type="PRO" id="PR:P75995"/>
<dbReference type="Proteomes" id="UP000000625">
    <property type="component" value="Chromosome"/>
</dbReference>
<dbReference type="GO" id="GO:0005886">
    <property type="term" value="C:plasma membrane"/>
    <property type="evidence" value="ECO:0000314"/>
    <property type="project" value="EcoCyc"/>
</dbReference>
<dbReference type="GO" id="GO:0071111">
    <property type="term" value="F:cyclic-guanylate-specific phosphodiesterase activity"/>
    <property type="evidence" value="ECO:0000318"/>
    <property type="project" value="GO_Central"/>
</dbReference>
<dbReference type="GO" id="GO:1900190">
    <property type="term" value="P:regulation of single-species biofilm formation"/>
    <property type="evidence" value="ECO:0000318"/>
    <property type="project" value="GO_Central"/>
</dbReference>
<dbReference type="CDD" id="cd01948">
    <property type="entry name" value="EAL"/>
    <property type="match status" value="1"/>
</dbReference>
<dbReference type="FunFam" id="3.20.20.450:FF:000001">
    <property type="entry name" value="Cyclic di-GMP phosphodiesterase yahA"/>
    <property type="match status" value="1"/>
</dbReference>
<dbReference type="Gene3D" id="3.20.20.450">
    <property type="entry name" value="EAL domain"/>
    <property type="match status" value="1"/>
</dbReference>
<dbReference type="InterPro" id="IPR024744">
    <property type="entry name" value="CSS-motif_dom"/>
</dbReference>
<dbReference type="InterPro" id="IPR050706">
    <property type="entry name" value="Cyclic-di-GMP_PDE-like"/>
</dbReference>
<dbReference type="InterPro" id="IPR001633">
    <property type="entry name" value="EAL_dom"/>
</dbReference>
<dbReference type="InterPro" id="IPR035919">
    <property type="entry name" value="EAL_sf"/>
</dbReference>
<dbReference type="PANTHER" id="PTHR33121:SF81">
    <property type="entry name" value="CYCLIC DI-GMP PHOSPHODIESTERASE PDEB-RELATED"/>
    <property type="match status" value="1"/>
</dbReference>
<dbReference type="PANTHER" id="PTHR33121">
    <property type="entry name" value="CYCLIC DI-GMP PHOSPHODIESTERASE PDEF"/>
    <property type="match status" value="1"/>
</dbReference>
<dbReference type="Pfam" id="PF12792">
    <property type="entry name" value="CSS-motif"/>
    <property type="match status" value="1"/>
</dbReference>
<dbReference type="Pfam" id="PF00563">
    <property type="entry name" value="EAL"/>
    <property type="match status" value="1"/>
</dbReference>
<dbReference type="SMART" id="SM00052">
    <property type="entry name" value="EAL"/>
    <property type="match status" value="1"/>
</dbReference>
<dbReference type="SUPFAM" id="SSF141868">
    <property type="entry name" value="EAL domain-like"/>
    <property type="match status" value="1"/>
</dbReference>
<dbReference type="PROSITE" id="PS50883">
    <property type="entry name" value="EAL"/>
    <property type="match status" value="1"/>
</dbReference>
<evidence type="ECO:0000250" key="1">
    <source>
        <dbReference type="UniProtKB" id="P21514"/>
    </source>
</evidence>
<evidence type="ECO:0000255" key="2"/>
<evidence type="ECO:0000255" key="3">
    <source>
        <dbReference type="PROSITE-ProRule" id="PRU00074"/>
    </source>
</evidence>
<evidence type="ECO:0000269" key="4">
    <source>
    </source>
</evidence>
<evidence type="ECO:0000269" key="5">
    <source>
    </source>
</evidence>
<evidence type="ECO:0000303" key="6">
    <source>
    </source>
</evidence>
<evidence type="ECO:0000305" key="7"/>
<accession>P75995</accession>
<protein>
    <recommendedName>
        <fullName evidence="7">Probable cyclic di-GMP phosphodiesterase PdeG</fullName>
        <ecNumber evidence="1">3.1.4.52</ecNumber>
    </recommendedName>
</protein>
<proteinExistence type="evidence at protein level"/>
<gene>
    <name evidence="6" type="primary">pdeG</name>
    <name type="synonym">ycgG</name>
    <name type="ordered locus">b1168</name>
    <name type="ordered locus">JW5174</name>
</gene>
<name>PDEG_ECOLI</name>
<keyword id="KW-0973">c-di-GMP</keyword>
<keyword id="KW-1003">Cell membrane</keyword>
<keyword id="KW-0378">Hydrolase</keyword>
<keyword id="KW-0472">Membrane</keyword>
<keyword id="KW-1185">Reference proteome</keyword>
<keyword id="KW-0812">Transmembrane</keyword>
<keyword id="KW-1133">Transmembrane helix</keyword>